<dbReference type="EC" id="3.4.23.-"/>
<dbReference type="PIR" id="S01798">
    <property type="entry name" value="S01798"/>
</dbReference>
<dbReference type="SMR" id="P20139"/>
<dbReference type="MEROPS" id="A01.057"/>
<dbReference type="GO" id="GO:0004190">
    <property type="term" value="F:aspartic-type endopeptidase activity"/>
    <property type="evidence" value="ECO:0007669"/>
    <property type="project" value="UniProtKB-KW"/>
</dbReference>
<dbReference type="GO" id="GO:0006508">
    <property type="term" value="P:proteolysis"/>
    <property type="evidence" value="ECO:0007669"/>
    <property type="project" value="UniProtKB-KW"/>
</dbReference>
<dbReference type="Gene3D" id="6.10.140.60">
    <property type="match status" value="1"/>
</dbReference>
<dbReference type="InterPro" id="IPR012848">
    <property type="entry name" value="Aspartic_peptidase_N"/>
</dbReference>
<dbReference type="Pfam" id="PF07966">
    <property type="entry name" value="A1_Propeptide"/>
    <property type="match status" value="1"/>
</dbReference>
<feature type="propeptide" id="PRO_0000026001" description="Activation peptide">
    <location>
        <begin position="1"/>
        <end position="41"/>
    </location>
</feature>
<feature type="chain" id="PRO_0000026002" description="Pepsin-1">
    <location>
        <begin position="42"/>
        <end position="58" status="greater than"/>
    </location>
</feature>
<feature type="non-terminal residue">
    <location>
        <position position="58"/>
    </location>
</feature>
<evidence type="ECO:0000305" key="1"/>
<comment type="similarity">
    <text evidence="1">Belongs to the peptidase A1 family.</text>
</comment>
<protein>
    <recommendedName>
        <fullName>Pepsin-1</fullName>
        <ecNumber>3.4.23.-</ecNumber>
    </recommendedName>
</protein>
<organism>
    <name type="scientific">Thunnus orientalis</name>
    <name type="common">North Pacific bluefin tuna</name>
    <name type="synonym">Thunnus thynnus orientalis</name>
    <dbReference type="NCBI Taxonomy" id="8238"/>
    <lineage>
        <taxon>Eukaryota</taxon>
        <taxon>Metazoa</taxon>
        <taxon>Chordata</taxon>
        <taxon>Craniata</taxon>
        <taxon>Vertebrata</taxon>
        <taxon>Euteleostomi</taxon>
        <taxon>Actinopterygii</taxon>
        <taxon>Neopterygii</taxon>
        <taxon>Teleostei</taxon>
        <taxon>Neoteleostei</taxon>
        <taxon>Acanthomorphata</taxon>
        <taxon>Pelagiaria</taxon>
        <taxon>Scombriformes</taxon>
        <taxon>Scombridae</taxon>
        <taxon>Thunnus</taxon>
    </lineage>
</organism>
<keyword id="KW-0064">Aspartyl protease</keyword>
<keyword id="KW-0903">Direct protein sequencing</keyword>
<keyword id="KW-0378">Hydrolase</keyword>
<keyword id="KW-0645">Protease</keyword>
<keyword id="KW-0865">Zymogen</keyword>
<proteinExistence type="evidence at protein level"/>
<reference key="1">
    <citation type="journal article" date="1988" name="Eur. J. Biochem.">
        <title>Tuna pepsinogens and pepsins. Purification, characterization and amino-terminal sequences.</title>
        <authorList>
            <person name="Tanji M."/>
            <person name="Kageyama T."/>
            <person name="Takahashi K."/>
        </authorList>
    </citation>
    <scope>PROTEIN SEQUENCE</scope>
</reference>
<accession>P20139</accession>
<name>PEP1_THUOR</name>
<sequence>LLQVPLEKGQSAREYLQEQGLWEQYRLKYPYNPMAKFDPSFAVAGEPMTNDADLAYYG</sequence>